<sequence length="294" mass="32748">MSFPEGKDILFMGNEAAKLAEAFQKSLRKPSHKRSQSIIGEKVNTVSETLELPTISRPTKPTILSEPKLAWTDKGGAIKTEAKQTIKVMDPIEEEEFTEKRVLPSSDGKTPAEKKLKPSTNTKKKVSFTPNEPGKYTKLEKDALDLLSDNEEEDAESSILTFEERDTSSLSIEARLESIEEKLSMILGLLRTLNIATAGPTAARDGIRDAMIGIREELIADIIKEAKGKAAEMMEEEMNQRTKIGNGSVKLTEKAKELNKIVEDESTSGESEEEEELKDTQENNQEDDIYQLIM</sequence>
<protein>
    <recommendedName>
        <fullName>Phosphoprotein</fullName>
        <shortName>Protein P</shortName>
    </recommendedName>
</protein>
<proteinExistence type="evidence at protein level"/>
<dbReference type="EMBL" id="AY145251">
    <property type="protein sequence ID" value="AAN52865.1"/>
    <property type="molecule type" value="Genomic_RNA"/>
</dbReference>
<dbReference type="EMBL" id="AY297749">
    <property type="protein sequence ID" value="AAQ67693.1"/>
    <property type="molecule type" value="Genomic_RNA"/>
</dbReference>
<dbReference type="RefSeq" id="YP_012606.1">
    <property type="nucleotide sequence ID" value="NC_004148.2"/>
</dbReference>
<dbReference type="PDB" id="6U5O">
    <property type="method" value="EM"/>
    <property type="resolution" value="3.70 A"/>
    <property type="chains" value="P/Q/R/S=1-294"/>
</dbReference>
<dbReference type="PDB" id="8FPJ">
    <property type="method" value="EM"/>
    <property type="resolution" value="2.74 A"/>
    <property type="chains" value="B/C/D/E=1-294"/>
</dbReference>
<dbReference type="PDB" id="8PDP">
    <property type="method" value="EM"/>
    <property type="resolution" value="2.90 A"/>
    <property type="chains" value="B=288-294"/>
</dbReference>
<dbReference type="PDB" id="8PDQ">
    <property type="method" value="EM"/>
    <property type="resolution" value="3.10 A"/>
    <property type="chains" value="B=288-294"/>
</dbReference>
<dbReference type="PDB" id="8PDR">
    <property type="method" value="EM"/>
    <property type="resolution" value="4.00 A"/>
    <property type="chains" value="L/M/N/O/P/Q/R/S/T/U/V=286-294"/>
</dbReference>
<dbReference type="PDB" id="8PDS">
    <property type="method" value="EM"/>
    <property type="resolution" value="2.90 A"/>
    <property type="chains" value="B/D=288-294"/>
</dbReference>
<dbReference type="PDBsum" id="6U5O"/>
<dbReference type="PDBsum" id="8FPJ"/>
<dbReference type="PDBsum" id="8PDP"/>
<dbReference type="PDBsum" id="8PDQ"/>
<dbReference type="PDBsum" id="8PDR"/>
<dbReference type="PDBsum" id="8PDS"/>
<dbReference type="EMDB" id="EMD-17617"/>
<dbReference type="EMDB" id="EMD-17618"/>
<dbReference type="EMDB" id="EMD-17619"/>
<dbReference type="EMDB" id="EMD-17620"/>
<dbReference type="EMDB" id="EMD-20651"/>
<dbReference type="EMDB" id="EMD-29366"/>
<dbReference type="SMR" id="Q8B9Q8"/>
<dbReference type="IntAct" id="Q8B9Q8">
    <property type="interactions" value="1"/>
</dbReference>
<dbReference type="Proteomes" id="UP000001398">
    <property type="component" value="Segment"/>
</dbReference>
<dbReference type="GO" id="GO:0030430">
    <property type="term" value="C:host cell cytoplasm"/>
    <property type="evidence" value="ECO:0007669"/>
    <property type="project" value="UniProtKB-SubCell"/>
</dbReference>
<dbReference type="GO" id="GO:0044423">
    <property type="term" value="C:virion component"/>
    <property type="evidence" value="ECO:0007669"/>
    <property type="project" value="UniProtKB-KW"/>
</dbReference>
<dbReference type="GO" id="GO:0003968">
    <property type="term" value="F:RNA-directed RNA polymerase activity"/>
    <property type="evidence" value="ECO:0007669"/>
    <property type="project" value="InterPro"/>
</dbReference>
<dbReference type="InterPro" id="IPR003487">
    <property type="entry name" value="Pprotein_pneumovir"/>
</dbReference>
<dbReference type="Pfam" id="PF02478">
    <property type="entry name" value="Pneumo_phosprot"/>
    <property type="match status" value="1"/>
</dbReference>
<reference key="1">
    <citation type="journal article" date="2003" name="Virus Res.">
        <title>Sequence analysis of the N, P, M and F genes of Canadian human metapneumovirus strains.</title>
        <authorList>
            <person name="Bastien N."/>
            <person name="Normand S."/>
            <person name="Taylor T."/>
            <person name="Ward D."/>
            <person name="Peret T.C."/>
            <person name="Boivin G."/>
            <person name="Anderson L.J."/>
            <person name="Li Y."/>
        </authorList>
    </citation>
    <scope>NUCLEOTIDE SEQUENCE [GENOMIC RNA]</scope>
</reference>
<reference key="2">
    <citation type="journal article" date="2003" name="Virology">
        <title>Genetic diversity between human metapneumovirus subgroups.</title>
        <authorList>
            <person name="Biacchesi S."/>
            <person name="Skiadopoulos M.H."/>
            <person name="Boivin G."/>
            <person name="Hanson C.T."/>
            <person name="Murphy B.R."/>
            <person name="Collins P.L."/>
            <person name="Buchholz U.J."/>
        </authorList>
    </citation>
    <scope>NUCLEOTIDE SEQUENCE [GENOMIC RNA]</scope>
</reference>
<reference key="3">
    <citation type="journal article" date="2005" name="J. Virol.">
        <title>Chimeric recombinant human metapneumoviruses with the nucleoprotein or phosphoprotein open reading frame replaced by that of avian metapneumovirus exhibit improved growth in vitro and attenuation in vivo.</title>
        <authorList>
            <person name="Pham Q.N."/>
            <person name="Biacchesi S."/>
            <person name="Skiadopoulos M.H."/>
            <person name="Murphy B.R."/>
            <person name="Collins P.L."/>
            <person name="Buchholz U.J."/>
        </authorList>
    </citation>
    <scope>NUCLEOTIDE SEQUENCE [GENOMIC RNA]</scope>
</reference>
<reference evidence="6" key="4">
    <citation type="journal article" date="2020" name="Nature">
        <title>Structure of the human metapneumovirus polymerase phosphoprotein complex.</title>
        <authorList>
            <person name="Pan J."/>
            <person name="Qian X."/>
            <person name="Lattmann S."/>
            <person name="El Sahili A."/>
            <person name="Yeo T.H."/>
            <person name="Jia H."/>
            <person name="Cressey T."/>
            <person name="Ludeke B."/>
            <person name="Noton S."/>
            <person name="Kalocsay M."/>
            <person name="Fearns R."/>
            <person name="Lescar J."/>
        </authorList>
    </citation>
    <scope>STRUCTURE BY ELECTRON MICROSCOPY (3.70 ANGSTROMS) IN COMPLEX WITH THE RNA-DIRECTED RNA POLYMERASE L</scope>
    <scope>SUBUNIT</scope>
    <scope>INTERACTION WITH RNA-DIRECTED RNA POLYMERASE L</scope>
    <scope>FUNCTION</scope>
</reference>
<feature type="chain" id="PRO_0000394809" description="Phosphoprotein">
    <location>
        <begin position="1"/>
        <end position="294"/>
    </location>
</feature>
<feature type="region of interest" description="Binding to monomeric RNA-free nucleoprotein" evidence="5">
    <location>
        <begin position="12"/>
        <end position="28"/>
    </location>
</feature>
<feature type="region of interest" description="Disordered" evidence="2">
    <location>
        <begin position="97"/>
        <end position="136"/>
    </location>
</feature>
<feature type="region of interest" description="Binding to host phosphatase PP1" evidence="1">
    <location>
        <begin position="123"/>
        <end position="128"/>
    </location>
</feature>
<feature type="region of interest" description="Binding to protein M2-1" evidence="1">
    <location>
        <begin position="135"/>
        <end position="157"/>
    </location>
</feature>
<feature type="region of interest" description="Oligomerization and binding to RNA-directed RNA polymerase L" evidence="3">
    <location>
        <begin position="169"/>
        <end position="194"/>
    </location>
</feature>
<feature type="region of interest" description="Binding to RNA-directed RNA polymerase L" evidence="1">
    <location>
        <begin position="251"/>
        <end position="279"/>
    </location>
</feature>
<feature type="region of interest" description="Disordered" evidence="2">
    <location>
        <begin position="260"/>
        <end position="294"/>
    </location>
</feature>
<feature type="region of interest" description="Binding to the N-RNA complex" evidence="1">
    <location>
        <begin position="281"/>
        <end position="294"/>
    </location>
</feature>
<feature type="compositionally biased region" description="Acidic residues" evidence="2">
    <location>
        <begin position="264"/>
        <end position="277"/>
    </location>
</feature>
<feature type="compositionally biased region" description="Acidic residues" evidence="2">
    <location>
        <begin position="284"/>
        <end position="294"/>
    </location>
</feature>
<feature type="modified residue" description="Phosphoserine" evidence="1">
    <location>
        <position position="106"/>
    </location>
</feature>
<feature type="modified residue" description="Phosphoserine" evidence="1">
    <location>
        <position position="148"/>
    </location>
</feature>
<feature type="modified residue" description="Phosphoserine" evidence="1">
    <location>
        <position position="157"/>
    </location>
</feature>
<feature type="modified residue" description="Phosphoserine" evidence="1">
    <location>
        <position position="158"/>
    </location>
</feature>
<feature type="modified residue" description="Phosphoserine" evidence="1">
    <location>
        <position position="168"/>
    </location>
</feature>
<feature type="modified residue" description="Phosphoserine" evidence="1">
    <location>
        <position position="171"/>
    </location>
</feature>
<feature type="helix" evidence="7">
    <location>
        <begin position="173"/>
        <end position="192"/>
    </location>
</feature>
<feature type="strand" evidence="7">
    <location>
        <begin position="194"/>
        <end position="196"/>
    </location>
</feature>
<feature type="strand" evidence="7">
    <location>
        <begin position="202"/>
        <end position="208"/>
    </location>
</feature>
<feature type="strand" evidence="7">
    <location>
        <begin position="211"/>
        <end position="213"/>
    </location>
</feature>
<feature type="helix" evidence="7">
    <location>
        <begin position="215"/>
        <end position="225"/>
    </location>
</feature>
<feature type="helix" evidence="7">
    <location>
        <begin position="229"/>
        <end position="238"/>
    </location>
</feature>
<feature type="strand" evidence="7">
    <location>
        <begin position="245"/>
        <end position="247"/>
    </location>
</feature>
<feature type="helix" evidence="7">
    <location>
        <begin position="255"/>
        <end position="262"/>
    </location>
</feature>
<feature type="helix" evidence="8">
    <location>
        <begin position="289"/>
        <end position="291"/>
    </location>
</feature>
<gene>
    <name type="primary">P</name>
</gene>
<organism>
    <name type="scientific">Human metapneumovirus (strain CAN97-83)</name>
    <name type="common">HMPV</name>
    <dbReference type="NCBI Taxonomy" id="694067"/>
    <lineage>
        <taxon>Viruses</taxon>
        <taxon>Riboviria</taxon>
        <taxon>Orthornavirae</taxon>
        <taxon>Negarnaviricota</taxon>
        <taxon>Haploviricotina</taxon>
        <taxon>Monjiviricetes</taxon>
        <taxon>Mononegavirales</taxon>
        <taxon>Pneumoviridae</taxon>
        <taxon>Metapneumovirus</taxon>
        <taxon>Metapneumovirus hominis</taxon>
    </lineage>
</organism>
<name>PHOSP_HMPVC</name>
<accession>Q8B9Q8</accession>
<keyword id="KW-0002">3D-structure</keyword>
<keyword id="KW-1035">Host cytoplasm</keyword>
<keyword id="KW-0597">Phosphoprotein</keyword>
<keyword id="KW-1185">Reference proteome</keyword>
<keyword id="KW-0693">Viral RNA replication</keyword>
<keyword id="KW-0946">Virion</keyword>
<evidence type="ECO:0000250" key="1">
    <source>
        <dbReference type="UniProtKB" id="P03421"/>
    </source>
</evidence>
<evidence type="ECO:0000256" key="2">
    <source>
        <dbReference type="SAM" id="MobiDB-lite"/>
    </source>
</evidence>
<evidence type="ECO:0000269" key="3">
    <source>
    </source>
</evidence>
<evidence type="ECO:0000305" key="4"/>
<evidence type="ECO:0000305" key="5">
    <source>
    </source>
</evidence>
<evidence type="ECO:0007744" key="6">
    <source>
        <dbReference type="PDB" id="6U5O"/>
    </source>
</evidence>
<evidence type="ECO:0007829" key="7">
    <source>
        <dbReference type="PDB" id="8FPJ"/>
    </source>
</evidence>
<evidence type="ECO:0007829" key="8">
    <source>
        <dbReference type="PDB" id="8PDP"/>
    </source>
</evidence>
<organismHost>
    <name type="scientific">Homo sapiens</name>
    <name type="common">Human</name>
    <dbReference type="NCBI Taxonomy" id="9606"/>
</organismHost>
<comment type="function">
    <text evidence="1 3">Plays critical roles in regulating RNA replication and transcription through its interactions with multiple proteins (By similarity). Tethers the RNA-directed RNA polymerase L to the nucleoprotein-RNA complex (PubMed:31698413). Recruits the M2-1 protein, a processivity factor that is required for efficient transcription of viral RNA (By similarity). Acts as a chaperone for neo-synthesized nucleoprotein by forming an N-P complex that preserves N in a monomeric and RNA-free state and prevents the association of nascent N with host cell RNAs (By similarity). Recruits the host phosphatase PP1 to inclusion bodies to regulate viral transcription (By similarity).</text>
</comment>
<comment type="subunit">
    <text evidence="1 3">Homotetramer (PubMed:31698413). Interacts with protein M2-1; the interaction between the two tetramers is required for the anti-termination and elongation transcriptional activities of protein M2-1 (By similarity). Interacts with host phosphatase PP1; this interaction recruits PP1 to the inclusion bodies (By similarity). Formation of a complex PP1/M2-1/P allows P to target host PP1 phosphatase to the M2-1 substrate (By similarity). Interacts with the nucleoprotein N; the phosphorylated phosphoprotein P binds to N-RNA complex. Interacts with the monomeric RNA-free nucleoprotein N (By similarity). Interacts with RNA-directed RNA polymerase L (via N-terminus); the association of P and L forms the polymerase complex (PubMed:31698413).</text>
</comment>
<comment type="subcellular location">
    <subcellularLocation>
        <location evidence="1">Virion</location>
    </subcellularLocation>
    <subcellularLocation>
        <location evidence="1">Host cytoplasm</location>
    </subcellularLocation>
    <text evidence="1">Localizes in cytoplasmic inclusion bodies.</text>
</comment>
<comment type="PTM">
    <text evidence="1">Constitutively phosphorylated by host.</text>
</comment>
<comment type="similarity">
    <text evidence="4">Belongs to the pneumoviridae phosphoprotein P family.</text>
</comment>